<accession>Q8IXM3</accession>
<accession>Q96Q49</accession>
<keyword id="KW-0002">3D-structure</keyword>
<keyword id="KW-0053">Apoptosis</keyword>
<keyword id="KW-0131">Cell cycle</keyword>
<keyword id="KW-0496">Mitochondrion</keyword>
<keyword id="KW-1267">Proteomics identification</keyword>
<keyword id="KW-1185">Reference proteome</keyword>
<keyword id="KW-0687">Ribonucleoprotein</keyword>
<keyword id="KW-0689">Ribosomal protein</keyword>
<keyword id="KW-0809">Transit peptide</keyword>
<sequence length="137" mass="15383">MGVLAAAARCLVRGADRMSKWTSKRGPRSFRGRKGRGAKGIGFLTSGWRFVQIKEMVPEFVVPDLTGFKLKPYVSYLAPESEETPLTAAQLFSEAVAPAIEKDFKDGTFDPDNLEKYGFEPTQEGKLFQLYPRNFLR</sequence>
<proteinExistence type="evidence at protein level"/>
<feature type="transit peptide" description="Mitochondrion" evidence="1">
    <location>
        <begin position="1"/>
        <end position="13"/>
    </location>
</feature>
<feature type="chain" id="PRO_0000273228" description="Large ribosomal subunit protein mL41">
    <location>
        <begin position="14"/>
        <end position="137"/>
    </location>
</feature>
<feature type="strand" evidence="21">
    <location>
        <begin position="17"/>
        <end position="19"/>
    </location>
</feature>
<feature type="turn" evidence="18">
    <location>
        <begin position="23"/>
        <end position="25"/>
    </location>
</feature>
<feature type="helix" evidence="19">
    <location>
        <begin position="28"/>
        <end position="33"/>
    </location>
</feature>
<feature type="strand" evidence="19">
    <location>
        <begin position="42"/>
        <end position="44"/>
    </location>
</feature>
<feature type="helix" evidence="19">
    <location>
        <begin position="46"/>
        <end position="48"/>
    </location>
</feature>
<feature type="strand" evidence="19">
    <location>
        <begin position="50"/>
        <end position="52"/>
    </location>
</feature>
<feature type="helix" evidence="19">
    <location>
        <begin position="54"/>
        <end position="56"/>
    </location>
</feature>
<feature type="strand" evidence="19">
    <location>
        <begin position="72"/>
        <end position="74"/>
    </location>
</feature>
<feature type="helix" evidence="19">
    <location>
        <begin position="88"/>
        <end position="95"/>
    </location>
</feature>
<feature type="helix" evidence="19">
    <location>
        <begin position="97"/>
        <end position="105"/>
    </location>
</feature>
<feature type="helix" evidence="19">
    <location>
        <begin position="115"/>
        <end position="117"/>
    </location>
</feature>
<feature type="strand" evidence="20">
    <location>
        <begin position="124"/>
        <end position="128"/>
    </location>
</feature>
<feature type="turn" evidence="19">
    <location>
        <begin position="130"/>
        <end position="133"/>
    </location>
</feature>
<dbReference type="EMBL" id="AY232291">
    <property type="protein sequence ID" value="AAP69986.1"/>
    <property type="molecule type" value="mRNA"/>
</dbReference>
<dbReference type="EMBL" id="AL365502">
    <property type="status" value="NOT_ANNOTATED_CDS"/>
    <property type="molecule type" value="Genomic_DNA"/>
</dbReference>
<dbReference type="EMBL" id="BC040035">
    <property type="protein sequence ID" value="AAH40035.1"/>
    <property type="molecule type" value="mRNA"/>
</dbReference>
<dbReference type="EMBL" id="AB051625">
    <property type="protein sequence ID" value="BAB54952.1"/>
    <property type="molecule type" value="Genomic_DNA"/>
</dbReference>
<dbReference type="CCDS" id="CCDS7046.1"/>
<dbReference type="RefSeq" id="NP_115866.1">
    <property type="nucleotide sequence ID" value="NM_032477.3"/>
</dbReference>
<dbReference type="PDB" id="3J7Y">
    <property type="method" value="EM"/>
    <property type="resolution" value="3.40 A"/>
    <property type="chains" value="9=1-137"/>
</dbReference>
<dbReference type="PDB" id="3J9M">
    <property type="method" value="EM"/>
    <property type="resolution" value="3.50 A"/>
    <property type="chains" value="9=1-137"/>
</dbReference>
<dbReference type="PDB" id="5OOL">
    <property type="method" value="EM"/>
    <property type="resolution" value="3.06 A"/>
    <property type="chains" value="9=1-137"/>
</dbReference>
<dbReference type="PDB" id="5OOM">
    <property type="method" value="EM"/>
    <property type="resolution" value="3.03 A"/>
    <property type="chains" value="9=1-137"/>
</dbReference>
<dbReference type="PDB" id="6I9R">
    <property type="method" value="EM"/>
    <property type="resolution" value="3.90 A"/>
    <property type="chains" value="9=1-137"/>
</dbReference>
<dbReference type="PDB" id="6NU2">
    <property type="method" value="EM"/>
    <property type="resolution" value="3.90 A"/>
    <property type="chains" value="9=15-137"/>
</dbReference>
<dbReference type="PDB" id="6NU3">
    <property type="method" value="EM"/>
    <property type="resolution" value="4.40 A"/>
    <property type="chains" value="9=1-137"/>
</dbReference>
<dbReference type="PDB" id="6VLZ">
    <property type="method" value="EM"/>
    <property type="resolution" value="2.97 A"/>
    <property type="chains" value="9=1-137"/>
</dbReference>
<dbReference type="PDB" id="6VMI">
    <property type="method" value="EM"/>
    <property type="resolution" value="2.96 A"/>
    <property type="chains" value="9=1-137"/>
</dbReference>
<dbReference type="PDB" id="6ZM5">
    <property type="method" value="EM"/>
    <property type="resolution" value="2.89 A"/>
    <property type="chains" value="9=1-137"/>
</dbReference>
<dbReference type="PDB" id="6ZM6">
    <property type="method" value="EM"/>
    <property type="resolution" value="2.59 A"/>
    <property type="chains" value="9=1-137"/>
</dbReference>
<dbReference type="PDB" id="6ZS9">
    <property type="method" value="EM"/>
    <property type="resolution" value="4.00 A"/>
    <property type="chains" value="9=1-137"/>
</dbReference>
<dbReference type="PDB" id="6ZSA">
    <property type="method" value="EM"/>
    <property type="resolution" value="4.00 A"/>
    <property type="chains" value="9=1-137"/>
</dbReference>
<dbReference type="PDB" id="6ZSB">
    <property type="method" value="EM"/>
    <property type="resolution" value="4.50 A"/>
    <property type="chains" value="9=1-137"/>
</dbReference>
<dbReference type="PDB" id="6ZSC">
    <property type="method" value="EM"/>
    <property type="resolution" value="3.50 A"/>
    <property type="chains" value="9=1-137"/>
</dbReference>
<dbReference type="PDB" id="6ZSD">
    <property type="method" value="EM"/>
    <property type="resolution" value="3.70 A"/>
    <property type="chains" value="9=1-137"/>
</dbReference>
<dbReference type="PDB" id="6ZSE">
    <property type="method" value="EM"/>
    <property type="resolution" value="5.00 A"/>
    <property type="chains" value="9=1-137"/>
</dbReference>
<dbReference type="PDB" id="6ZSG">
    <property type="method" value="EM"/>
    <property type="resolution" value="4.00 A"/>
    <property type="chains" value="9=1-137"/>
</dbReference>
<dbReference type="PDB" id="7A5F">
    <property type="method" value="EM"/>
    <property type="resolution" value="4.40 A"/>
    <property type="chains" value="93=1-137"/>
</dbReference>
<dbReference type="PDB" id="7A5G">
    <property type="method" value="EM"/>
    <property type="resolution" value="4.33 A"/>
    <property type="chains" value="93=1-137"/>
</dbReference>
<dbReference type="PDB" id="7A5H">
    <property type="method" value="EM"/>
    <property type="resolution" value="3.30 A"/>
    <property type="chains" value="9=1-137"/>
</dbReference>
<dbReference type="PDB" id="7A5I">
    <property type="method" value="EM"/>
    <property type="resolution" value="3.70 A"/>
    <property type="chains" value="93=1-137"/>
</dbReference>
<dbReference type="PDB" id="7A5J">
    <property type="method" value="EM"/>
    <property type="resolution" value="3.10 A"/>
    <property type="chains" value="9=1-137"/>
</dbReference>
<dbReference type="PDB" id="7A5K">
    <property type="method" value="EM"/>
    <property type="resolution" value="3.70 A"/>
    <property type="chains" value="93=1-137"/>
</dbReference>
<dbReference type="PDB" id="7L08">
    <property type="method" value="EM"/>
    <property type="resolution" value="3.49 A"/>
    <property type="chains" value="9=1-137"/>
</dbReference>
<dbReference type="PDB" id="7L20">
    <property type="method" value="EM"/>
    <property type="resolution" value="3.15 A"/>
    <property type="chains" value="9=1-137"/>
</dbReference>
<dbReference type="PDB" id="7O9K">
    <property type="method" value="EM"/>
    <property type="resolution" value="3.10 A"/>
    <property type="chains" value="9=1-137"/>
</dbReference>
<dbReference type="PDB" id="7O9M">
    <property type="method" value="EM"/>
    <property type="resolution" value="2.50 A"/>
    <property type="chains" value="9=1-137"/>
</dbReference>
<dbReference type="PDB" id="7ODR">
    <property type="method" value="EM"/>
    <property type="resolution" value="2.90 A"/>
    <property type="chains" value="9=1-137"/>
</dbReference>
<dbReference type="PDB" id="7ODS">
    <property type="method" value="EM"/>
    <property type="resolution" value="3.10 A"/>
    <property type="chains" value="9=1-137"/>
</dbReference>
<dbReference type="PDB" id="7ODT">
    <property type="method" value="EM"/>
    <property type="resolution" value="3.10 A"/>
    <property type="chains" value="9=1-137"/>
</dbReference>
<dbReference type="PDB" id="7OF0">
    <property type="method" value="EM"/>
    <property type="resolution" value="2.20 A"/>
    <property type="chains" value="9=1-137"/>
</dbReference>
<dbReference type="PDB" id="7OF2">
    <property type="method" value="EM"/>
    <property type="resolution" value="2.70 A"/>
    <property type="chains" value="9=1-137"/>
</dbReference>
<dbReference type="PDB" id="7OF3">
    <property type="method" value="EM"/>
    <property type="resolution" value="2.70 A"/>
    <property type="chains" value="9=1-137"/>
</dbReference>
<dbReference type="PDB" id="7OF4">
    <property type="method" value="EM"/>
    <property type="resolution" value="2.70 A"/>
    <property type="chains" value="9=1-137"/>
</dbReference>
<dbReference type="PDB" id="7OF5">
    <property type="method" value="EM"/>
    <property type="resolution" value="2.90 A"/>
    <property type="chains" value="9=1-137"/>
</dbReference>
<dbReference type="PDB" id="7OF6">
    <property type="method" value="EM"/>
    <property type="resolution" value="2.60 A"/>
    <property type="chains" value="9=1-137"/>
</dbReference>
<dbReference type="PDB" id="7OF7">
    <property type="method" value="EM"/>
    <property type="resolution" value="2.50 A"/>
    <property type="chains" value="9=1-137"/>
</dbReference>
<dbReference type="PDB" id="7OG4">
    <property type="method" value="EM"/>
    <property type="resolution" value="3.80 A"/>
    <property type="chains" value="9=1-137"/>
</dbReference>
<dbReference type="PDB" id="7OI6">
    <property type="method" value="EM"/>
    <property type="resolution" value="5.70 A"/>
    <property type="chains" value="9=1-137"/>
</dbReference>
<dbReference type="PDB" id="7OI7">
    <property type="method" value="EM"/>
    <property type="resolution" value="3.50 A"/>
    <property type="chains" value="9=1-137"/>
</dbReference>
<dbReference type="PDB" id="7OI8">
    <property type="method" value="EM"/>
    <property type="resolution" value="3.50 A"/>
    <property type="chains" value="9=1-137"/>
</dbReference>
<dbReference type="PDB" id="7OI9">
    <property type="method" value="EM"/>
    <property type="resolution" value="3.30 A"/>
    <property type="chains" value="9=1-137"/>
</dbReference>
<dbReference type="PDB" id="7OIA">
    <property type="method" value="EM"/>
    <property type="resolution" value="3.20 A"/>
    <property type="chains" value="9=1-137"/>
</dbReference>
<dbReference type="PDB" id="7OIB">
    <property type="method" value="EM"/>
    <property type="resolution" value="3.30 A"/>
    <property type="chains" value="9=1-137"/>
</dbReference>
<dbReference type="PDB" id="7OIC">
    <property type="method" value="EM"/>
    <property type="resolution" value="3.10 A"/>
    <property type="chains" value="9=1-137"/>
</dbReference>
<dbReference type="PDB" id="7OID">
    <property type="method" value="EM"/>
    <property type="resolution" value="3.70 A"/>
    <property type="chains" value="9=1-137"/>
</dbReference>
<dbReference type="PDB" id="7OIE">
    <property type="method" value="EM"/>
    <property type="resolution" value="3.50 A"/>
    <property type="chains" value="9=1-137"/>
</dbReference>
<dbReference type="PDB" id="7PD3">
    <property type="method" value="EM"/>
    <property type="resolution" value="3.40 A"/>
    <property type="chains" value="9=1-137"/>
</dbReference>
<dbReference type="PDB" id="7PO4">
    <property type="method" value="EM"/>
    <property type="resolution" value="2.56 A"/>
    <property type="chains" value="9=1-137"/>
</dbReference>
<dbReference type="PDB" id="7QH6">
    <property type="method" value="EM"/>
    <property type="resolution" value="3.08 A"/>
    <property type="chains" value="9=1-137"/>
</dbReference>
<dbReference type="PDB" id="7QH7">
    <property type="method" value="EM"/>
    <property type="resolution" value="2.89 A"/>
    <property type="chains" value="9=15-137"/>
</dbReference>
<dbReference type="PDB" id="7QI4">
    <property type="method" value="EM"/>
    <property type="resolution" value="2.21 A"/>
    <property type="chains" value="9=1-137"/>
</dbReference>
<dbReference type="PDB" id="7QI5">
    <property type="method" value="EM"/>
    <property type="resolution" value="2.63 A"/>
    <property type="chains" value="9=1-137"/>
</dbReference>
<dbReference type="PDB" id="7QI6">
    <property type="method" value="EM"/>
    <property type="resolution" value="2.98 A"/>
    <property type="chains" value="9=1-137"/>
</dbReference>
<dbReference type="PDB" id="8ANY">
    <property type="method" value="EM"/>
    <property type="resolution" value="2.85 A"/>
    <property type="chains" value="9=1-137"/>
</dbReference>
<dbReference type="PDB" id="8K2A">
    <property type="method" value="EM"/>
    <property type="resolution" value="2.90 A"/>
    <property type="chains" value="Lo=1-137"/>
</dbReference>
<dbReference type="PDB" id="8K2B">
    <property type="method" value="EM"/>
    <property type="resolution" value="3.40 A"/>
    <property type="chains" value="Lo=1-137"/>
</dbReference>
<dbReference type="PDB" id="8OIR">
    <property type="method" value="EM"/>
    <property type="resolution" value="3.10 A"/>
    <property type="chains" value="Bq=1-137"/>
</dbReference>
<dbReference type="PDB" id="8OIT">
    <property type="method" value="EM"/>
    <property type="resolution" value="2.90 A"/>
    <property type="chains" value="Bq=1-137"/>
</dbReference>
<dbReference type="PDB" id="8PK0">
    <property type="method" value="EM"/>
    <property type="resolution" value="3.03 A"/>
    <property type="chains" value="9=1-137"/>
</dbReference>
<dbReference type="PDB" id="8QSJ">
    <property type="method" value="EM"/>
    <property type="resolution" value="3.00 A"/>
    <property type="chains" value="9=1-137"/>
</dbReference>
<dbReference type="PDB" id="8QU5">
    <property type="method" value="EM"/>
    <property type="resolution" value="2.42 A"/>
    <property type="chains" value="9=1-137"/>
</dbReference>
<dbReference type="PDB" id="8RRI">
    <property type="method" value="EM"/>
    <property type="resolution" value="2.40 A"/>
    <property type="chains" value="9=1-137"/>
</dbReference>
<dbReference type="PDB" id="8XT0">
    <property type="method" value="EM"/>
    <property type="resolution" value="3.20 A"/>
    <property type="chains" value="Lo=1-137"/>
</dbReference>
<dbReference type="PDB" id="8XT1">
    <property type="method" value="EM"/>
    <property type="resolution" value="3.10 A"/>
    <property type="chains" value="Lo=1-137"/>
</dbReference>
<dbReference type="PDB" id="8XT2">
    <property type="method" value="EM"/>
    <property type="resolution" value="3.30 A"/>
    <property type="chains" value="Lo=1-137"/>
</dbReference>
<dbReference type="PDB" id="8XT3">
    <property type="method" value="EM"/>
    <property type="resolution" value="3.10 A"/>
    <property type="chains" value="Lo=1-137"/>
</dbReference>
<dbReference type="PDBsum" id="3J7Y"/>
<dbReference type="PDBsum" id="3J9M"/>
<dbReference type="PDBsum" id="5OOL"/>
<dbReference type="PDBsum" id="5OOM"/>
<dbReference type="PDBsum" id="6I9R"/>
<dbReference type="PDBsum" id="6NU2"/>
<dbReference type="PDBsum" id="6NU3"/>
<dbReference type="PDBsum" id="6VLZ"/>
<dbReference type="PDBsum" id="6VMI"/>
<dbReference type="PDBsum" id="6ZM5"/>
<dbReference type="PDBsum" id="6ZM6"/>
<dbReference type="PDBsum" id="6ZS9"/>
<dbReference type="PDBsum" id="6ZSA"/>
<dbReference type="PDBsum" id="6ZSB"/>
<dbReference type="PDBsum" id="6ZSC"/>
<dbReference type="PDBsum" id="6ZSD"/>
<dbReference type="PDBsum" id="6ZSE"/>
<dbReference type="PDBsum" id="6ZSG"/>
<dbReference type="PDBsum" id="7A5F"/>
<dbReference type="PDBsum" id="7A5G"/>
<dbReference type="PDBsum" id="7A5H"/>
<dbReference type="PDBsum" id="7A5I"/>
<dbReference type="PDBsum" id="7A5J"/>
<dbReference type="PDBsum" id="7A5K"/>
<dbReference type="PDBsum" id="7L08"/>
<dbReference type="PDBsum" id="7L20"/>
<dbReference type="PDBsum" id="7O9K"/>
<dbReference type="PDBsum" id="7O9M"/>
<dbReference type="PDBsum" id="7ODR"/>
<dbReference type="PDBsum" id="7ODS"/>
<dbReference type="PDBsum" id="7ODT"/>
<dbReference type="PDBsum" id="7OF0"/>
<dbReference type="PDBsum" id="7OF2"/>
<dbReference type="PDBsum" id="7OF3"/>
<dbReference type="PDBsum" id="7OF4"/>
<dbReference type="PDBsum" id="7OF5"/>
<dbReference type="PDBsum" id="7OF6"/>
<dbReference type="PDBsum" id="7OF7"/>
<dbReference type="PDBsum" id="7OG4"/>
<dbReference type="PDBsum" id="7OI6"/>
<dbReference type="PDBsum" id="7OI7"/>
<dbReference type="PDBsum" id="7OI8"/>
<dbReference type="PDBsum" id="7OI9"/>
<dbReference type="PDBsum" id="7OIA"/>
<dbReference type="PDBsum" id="7OIB"/>
<dbReference type="PDBsum" id="7OIC"/>
<dbReference type="PDBsum" id="7OID"/>
<dbReference type="PDBsum" id="7OIE"/>
<dbReference type="PDBsum" id="7PD3"/>
<dbReference type="PDBsum" id="7PO4"/>
<dbReference type="PDBsum" id="7QH6"/>
<dbReference type="PDBsum" id="7QH7"/>
<dbReference type="PDBsum" id="7QI4"/>
<dbReference type="PDBsum" id="7QI5"/>
<dbReference type="PDBsum" id="7QI6"/>
<dbReference type="PDBsum" id="8ANY"/>
<dbReference type="PDBsum" id="8K2A"/>
<dbReference type="PDBsum" id="8K2B"/>
<dbReference type="PDBsum" id="8OIR"/>
<dbReference type="PDBsum" id="8OIT"/>
<dbReference type="PDBsum" id="8PK0"/>
<dbReference type="PDBsum" id="8QSJ"/>
<dbReference type="PDBsum" id="8QU5"/>
<dbReference type="PDBsum" id="8RRI"/>
<dbReference type="PDBsum" id="8XT0"/>
<dbReference type="PDBsum" id="8XT1"/>
<dbReference type="PDBsum" id="8XT2"/>
<dbReference type="PDBsum" id="8XT3"/>
<dbReference type="EMDB" id="EMD-0514"/>
<dbReference type="EMDB" id="EMD-0515"/>
<dbReference type="EMDB" id="EMD-11278"/>
<dbReference type="EMDB" id="EMD-11279"/>
<dbReference type="EMDB" id="EMD-11390"/>
<dbReference type="EMDB" id="EMD-11391"/>
<dbReference type="EMDB" id="EMD-11392"/>
<dbReference type="EMDB" id="EMD-11393"/>
<dbReference type="EMDB" id="EMD-11394"/>
<dbReference type="EMDB" id="EMD-11395"/>
<dbReference type="EMDB" id="EMD-11397"/>
<dbReference type="EMDB" id="EMD-11641"/>
<dbReference type="EMDB" id="EMD-11642"/>
<dbReference type="EMDB" id="EMD-11643"/>
<dbReference type="EMDB" id="EMD-11644"/>
<dbReference type="EMDB" id="EMD-11645"/>
<dbReference type="EMDB" id="EMD-11646"/>
<dbReference type="EMDB" id="EMD-12763"/>
<dbReference type="EMDB" id="EMD-12764"/>
<dbReference type="EMDB" id="EMD-12845"/>
<dbReference type="EMDB" id="EMD-12846"/>
<dbReference type="EMDB" id="EMD-12847"/>
<dbReference type="EMDB" id="EMD-12865"/>
<dbReference type="EMDB" id="EMD-12867"/>
<dbReference type="EMDB" id="EMD-12868"/>
<dbReference type="EMDB" id="EMD-12869"/>
<dbReference type="EMDB" id="EMD-12870"/>
<dbReference type="EMDB" id="EMD-12871"/>
<dbReference type="EMDB" id="EMD-12872"/>
<dbReference type="EMDB" id="EMD-12877"/>
<dbReference type="EMDB" id="EMD-12919"/>
<dbReference type="EMDB" id="EMD-12920"/>
<dbReference type="EMDB" id="EMD-12921"/>
<dbReference type="EMDB" id="EMD-12922"/>
<dbReference type="EMDB" id="EMD-12923"/>
<dbReference type="EMDB" id="EMD-12924"/>
<dbReference type="EMDB" id="EMD-12925"/>
<dbReference type="EMDB" id="EMD-12926"/>
<dbReference type="EMDB" id="EMD-12927"/>
<dbReference type="EMDB" id="EMD-13329"/>
<dbReference type="EMDB" id="EMD-13562"/>
<dbReference type="EMDB" id="EMD-13965"/>
<dbReference type="EMDB" id="EMD-13967"/>
<dbReference type="EMDB" id="EMD-13980"/>
<dbReference type="EMDB" id="EMD-13981"/>
<dbReference type="EMDB" id="EMD-13982"/>
<dbReference type="EMDB" id="EMD-15544"/>
<dbReference type="EMDB" id="EMD-16897"/>
<dbReference type="EMDB" id="EMD-16899"/>
<dbReference type="EMDB" id="EMD-17719"/>
<dbReference type="EMDB" id="EMD-19460"/>
<dbReference type="EMDB" id="EMD-21233"/>
<dbReference type="EMDB" id="EMD-21242"/>
<dbReference type="EMDB" id="EMD-23096"/>
<dbReference type="EMDB" id="EMD-23121"/>
<dbReference type="EMDB" id="EMD-36836"/>
<dbReference type="EMDB" id="EMD-36837"/>
<dbReference type="EMDB" id="EMD-3842"/>
<dbReference type="EMDB" id="EMD-3843"/>
<dbReference type="EMDB" id="EMD-38632"/>
<dbReference type="EMDB" id="EMD-38633"/>
<dbReference type="EMDB" id="EMD-38634"/>
<dbReference type="EMDB" id="EMD-38635"/>
<dbReference type="EMDB" id="EMD-4434"/>
<dbReference type="SMR" id="Q8IXM3"/>
<dbReference type="BioGRID" id="122363">
    <property type="interactions" value="219"/>
</dbReference>
<dbReference type="ComplexPortal" id="CPX-5226">
    <property type="entry name" value="39S mitochondrial large ribosomal subunit"/>
</dbReference>
<dbReference type="CORUM" id="Q8IXM3"/>
<dbReference type="FunCoup" id="Q8IXM3">
    <property type="interactions" value="852"/>
</dbReference>
<dbReference type="IntAct" id="Q8IXM3">
    <property type="interactions" value="110"/>
</dbReference>
<dbReference type="MINT" id="Q8IXM3"/>
<dbReference type="STRING" id="9606.ENSP00000360498"/>
<dbReference type="GlyGen" id="Q8IXM3">
    <property type="glycosylation" value="2 sites, 1 O-linked glycan (2 sites)"/>
</dbReference>
<dbReference type="iPTMnet" id="Q8IXM3"/>
<dbReference type="PhosphoSitePlus" id="Q8IXM3"/>
<dbReference type="BioMuta" id="MRPL41"/>
<dbReference type="DMDM" id="74750734"/>
<dbReference type="jPOST" id="Q8IXM3"/>
<dbReference type="MassIVE" id="Q8IXM3"/>
<dbReference type="PaxDb" id="9606-ENSP00000360498"/>
<dbReference type="PeptideAtlas" id="Q8IXM3"/>
<dbReference type="ProteomicsDB" id="71029"/>
<dbReference type="Pumba" id="Q8IXM3"/>
<dbReference type="TopDownProteomics" id="Q8IXM3"/>
<dbReference type="Antibodypedia" id="19072">
    <property type="antibodies" value="151 antibodies from 23 providers"/>
</dbReference>
<dbReference type="DNASU" id="64975"/>
<dbReference type="Ensembl" id="ENST00000371443.6">
    <property type="protein sequence ID" value="ENSP00000360498.5"/>
    <property type="gene ID" value="ENSG00000182154.8"/>
</dbReference>
<dbReference type="GeneID" id="64975"/>
<dbReference type="KEGG" id="hsa:64975"/>
<dbReference type="MANE-Select" id="ENST00000371443.6">
    <property type="protein sequence ID" value="ENSP00000360498.5"/>
    <property type="RefSeq nucleotide sequence ID" value="NM_032477.3"/>
    <property type="RefSeq protein sequence ID" value="NP_115866.1"/>
</dbReference>
<dbReference type="UCSC" id="uc004cnh.5">
    <property type="organism name" value="human"/>
</dbReference>
<dbReference type="AGR" id="HGNC:14492"/>
<dbReference type="CTD" id="64975"/>
<dbReference type="DisGeNET" id="64975"/>
<dbReference type="GeneCards" id="MRPL41"/>
<dbReference type="HGNC" id="HGNC:14492">
    <property type="gene designation" value="MRPL41"/>
</dbReference>
<dbReference type="HPA" id="ENSG00000182154">
    <property type="expression patterns" value="Tissue enhanced (heart muscle, skeletal muscle)"/>
</dbReference>
<dbReference type="MIM" id="611846">
    <property type="type" value="gene"/>
</dbReference>
<dbReference type="neXtProt" id="NX_Q8IXM3"/>
<dbReference type="OpenTargets" id="ENSG00000182154"/>
<dbReference type="PharmGKB" id="PA30973"/>
<dbReference type="VEuPathDB" id="HostDB:ENSG00000182154"/>
<dbReference type="eggNOG" id="KOG4756">
    <property type="taxonomic scope" value="Eukaryota"/>
</dbReference>
<dbReference type="GeneTree" id="ENSGT00390000013158"/>
<dbReference type="HOGENOM" id="CLU_155983_0_0_1"/>
<dbReference type="InParanoid" id="Q8IXM3"/>
<dbReference type="OMA" id="DRMSAWT"/>
<dbReference type="OrthoDB" id="408933at2759"/>
<dbReference type="PAN-GO" id="Q8IXM3">
    <property type="GO annotations" value="3 GO annotations based on evolutionary models"/>
</dbReference>
<dbReference type="PhylomeDB" id="Q8IXM3"/>
<dbReference type="TreeFam" id="TF325007"/>
<dbReference type="PathwayCommons" id="Q8IXM3"/>
<dbReference type="Reactome" id="R-HSA-5368286">
    <property type="pathway name" value="Mitochondrial translation initiation"/>
</dbReference>
<dbReference type="Reactome" id="R-HSA-5389840">
    <property type="pathway name" value="Mitochondrial translation elongation"/>
</dbReference>
<dbReference type="Reactome" id="R-HSA-5419276">
    <property type="pathway name" value="Mitochondrial translation termination"/>
</dbReference>
<dbReference type="SignaLink" id="Q8IXM3"/>
<dbReference type="SIGNOR" id="Q8IXM3"/>
<dbReference type="BioGRID-ORCS" id="64975">
    <property type="hits" value="544 hits in 1167 CRISPR screens"/>
</dbReference>
<dbReference type="ChiTaRS" id="MRPL41">
    <property type="organism name" value="human"/>
</dbReference>
<dbReference type="EvolutionaryTrace" id="Q8IXM3"/>
<dbReference type="GeneWiki" id="Mitochondrial_ribosomal_protein_L41"/>
<dbReference type="GenomeRNAi" id="64975"/>
<dbReference type="Pharos" id="Q8IXM3">
    <property type="development level" value="Tbio"/>
</dbReference>
<dbReference type="PRO" id="PR:Q8IXM3"/>
<dbReference type="Proteomes" id="UP000005640">
    <property type="component" value="Chromosome 9"/>
</dbReference>
<dbReference type="RNAct" id="Q8IXM3">
    <property type="molecule type" value="protein"/>
</dbReference>
<dbReference type="Bgee" id="ENSG00000182154">
    <property type="expression patterns" value="Expressed in apex of heart and 182 other cell types or tissues"/>
</dbReference>
<dbReference type="GO" id="GO:0005743">
    <property type="term" value="C:mitochondrial inner membrane"/>
    <property type="evidence" value="ECO:0000304"/>
    <property type="project" value="Reactome"/>
</dbReference>
<dbReference type="GO" id="GO:0005762">
    <property type="term" value="C:mitochondrial large ribosomal subunit"/>
    <property type="evidence" value="ECO:0000314"/>
    <property type="project" value="UniProtKB"/>
</dbReference>
<dbReference type="GO" id="GO:0005739">
    <property type="term" value="C:mitochondrion"/>
    <property type="evidence" value="ECO:0000314"/>
    <property type="project" value="UniProtKB"/>
</dbReference>
<dbReference type="GO" id="GO:1990904">
    <property type="term" value="C:ribonucleoprotein complex"/>
    <property type="evidence" value="ECO:0000314"/>
    <property type="project" value="UniProtKB"/>
</dbReference>
<dbReference type="GO" id="GO:0003723">
    <property type="term" value="F:RNA binding"/>
    <property type="evidence" value="ECO:0007005"/>
    <property type="project" value="UniProtKB"/>
</dbReference>
<dbReference type="GO" id="GO:0003735">
    <property type="term" value="F:structural constituent of ribosome"/>
    <property type="evidence" value="ECO:0000314"/>
    <property type="project" value="UniProtKB"/>
</dbReference>
<dbReference type="GO" id="GO:0006915">
    <property type="term" value="P:apoptotic process"/>
    <property type="evidence" value="ECO:0007669"/>
    <property type="project" value="UniProtKB-KW"/>
</dbReference>
<dbReference type="GO" id="GO:0032543">
    <property type="term" value="P:mitochondrial translation"/>
    <property type="evidence" value="ECO:0000303"/>
    <property type="project" value="ComplexPortal"/>
</dbReference>
<dbReference type="GO" id="GO:0006412">
    <property type="term" value="P:translation"/>
    <property type="evidence" value="ECO:0000314"/>
    <property type="project" value="UniProtKB"/>
</dbReference>
<dbReference type="InterPro" id="IPR019189">
    <property type="entry name" value="Ribosomal_mL41"/>
</dbReference>
<dbReference type="PANTHER" id="PTHR21338:SF0">
    <property type="entry name" value="LARGE RIBOSOMAL SUBUNIT PROTEIN ML41"/>
    <property type="match status" value="1"/>
</dbReference>
<dbReference type="PANTHER" id="PTHR21338">
    <property type="entry name" value="MITOCHONDRIAL RIBOSOMAL PROTEIN L41"/>
    <property type="match status" value="1"/>
</dbReference>
<dbReference type="Pfam" id="PF09809">
    <property type="entry name" value="MRP-L27"/>
    <property type="match status" value="1"/>
</dbReference>
<gene>
    <name type="primary">MRPL41</name>
    <name type="synonym">BMRP</name>
    <name type="synonym">MRPL27</name>
    <name type="synonym">RPML27</name>
    <name type="ORF">PIG3</name>
</gene>
<reference key="1">
    <citation type="submission" date="2003-02" db="EMBL/GenBank/DDBJ databases">
        <authorList>
            <person name="Kim J.W."/>
        </authorList>
    </citation>
    <scope>NUCLEOTIDE SEQUENCE [LARGE SCALE MRNA]</scope>
</reference>
<reference key="2">
    <citation type="journal article" date="2004" name="Nature">
        <title>DNA sequence and analysis of human chromosome 9.</title>
        <authorList>
            <person name="Humphray S.J."/>
            <person name="Oliver K."/>
            <person name="Hunt A.R."/>
            <person name="Plumb R.W."/>
            <person name="Loveland J.E."/>
            <person name="Howe K.L."/>
            <person name="Andrews T.D."/>
            <person name="Searle S."/>
            <person name="Hunt S.E."/>
            <person name="Scott C.E."/>
            <person name="Jones M.C."/>
            <person name="Ainscough R."/>
            <person name="Almeida J.P."/>
            <person name="Ambrose K.D."/>
            <person name="Ashwell R.I.S."/>
            <person name="Babbage A.K."/>
            <person name="Babbage S."/>
            <person name="Bagguley C.L."/>
            <person name="Bailey J."/>
            <person name="Banerjee R."/>
            <person name="Barker D.J."/>
            <person name="Barlow K.F."/>
            <person name="Bates K."/>
            <person name="Beasley H."/>
            <person name="Beasley O."/>
            <person name="Bird C.P."/>
            <person name="Bray-Allen S."/>
            <person name="Brown A.J."/>
            <person name="Brown J.Y."/>
            <person name="Burford D."/>
            <person name="Burrill W."/>
            <person name="Burton J."/>
            <person name="Carder C."/>
            <person name="Carter N.P."/>
            <person name="Chapman J.C."/>
            <person name="Chen Y."/>
            <person name="Clarke G."/>
            <person name="Clark S.Y."/>
            <person name="Clee C.M."/>
            <person name="Clegg S."/>
            <person name="Collier R.E."/>
            <person name="Corby N."/>
            <person name="Crosier M."/>
            <person name="Cummings A.T."/>
            <person name="Davies J."/>
            <person name="Dhami P."/>
            <person name="Dunn M."/>
            <person name="Dutta I."/>
            <person name="Dyer L.W."/>
            <person name="Earthrowl M.E."/>
            <person name="Faulkner L."/>
            <person name="Fleming C.J."/>
            <person name="Frankish A."/>
            <person name="Frankland J.A."/>
            <person name="French L."/>
            <person name="Fricker D.G."/>
            <person name="Garner P."/>
            <person name="Garnett J."/>
            <person name="Ghori J."/>
            <person name="Gilbert J.G.R."/>
            <person name="Glison C."/>
            <person name="Grafham D.V."/>
            <person name="Gribble S."/>
            <person name="Griffiths C."/>
            <person name="Griffiths-Jones S."/>
            <person name="Grocock R."/>
            <person name="Guy J."/>
            <person name="Hall R.E."/>
            <person name="Hammond S."/>
            <person name="Harley J.L."/>
            <person name="Harrison E.S.I."/>
            <person name="Hart E.A."/>
            <person name="Heath P.D."/>
            <person name="Henderson C.D."/>
            <person name="Hopkins B.L."/>
            <person name="Howard P.J."/>
            <person name="Howden P.J."/>
            <person name="Huckle E."/>
            <person name="Johnson C."/>
            <person name="Johnson D."/>
            <person name="Joy A.A."/>
            <person name="Kay M."/>
            <person name="Keenan S."/>
            <person name="Kershaw J.K."/>
            <person name="Kimberley A.M."/>
            <person name="King A."/>
            <person name="Knights A."/>
            <person name="Laird G.K."/>
            <person name="Langford C."/>
            <person name="Lawlor S."/>
            <person name="Leongamornlert D.A."/>
            <person name="Leversha M."/>
            <person name="Lloyd C."/>
            <person name="Lloyd D.M."/>
            <person name="Lovell J."/>
            <person name="Martin S."/>
            <person name="Mashreghi-Mohammadi M."/>
            <person name="Matthews L."/>
            <person name="McLaren S."/>
            <person name="McLay K.E."/>
            <person name="McMurray A."/>
            <person name="Milne S."/>
            <person name="Nickerson T."/>
            <person name="Nisbett J."/>
            <person name="Nordsiek G."/>
            <person name="Pearce A.V."/>
            <person name="Peck A.I."/>
            <person name="Porter K.M."/>
            <person name="Pandian R."/>
            <person name="Pelan S."/>
            <person name="Phillimore B."/>
            <person name="Povey S."/>
            <person name="Ramsey Y."/>
            <person name="Rand V."/>
            <person name="Scharfe M."/>
            <person name="Sehra H.K."/>
            <person name="Shownkeen R."/>
            <person name="Sims S.K."/>
            <person name="Skuce C.D."/>
            <person name="Smith M."/>
            <person name="Steward C.A."/>
            <person name="Swarbreck D."/>
            <person name="Sycamore N."/>
            <person name="Tester J."/>
            <person name="Thorpe A."/>
            <person name="Tracey A."/>
            <person name="Tromans A."/>
            <person name="Thomas D.W."/>
            <person name="Wall M."/>
            <person name="Wallis J.M."/>
            <person name="West A.P."/>
            <person name="Whitehead S.L."/>
            <person name="Willey D.L."/>
            <person name="Williams S.A."/>
            <person name="Wilming L."/>
            <person name="Wray P.W."/>
            <person name="Young L."/>
            <person name="Ashurst J.L."/>
            <person name="Coulson A."/>
            <person name="Blocker H."/>
            <person name="Durbin R.M."/>
            <person name="Sulston J.E."/>
            <person name="Hubbard T."/>
            <person name="Jackson M.J."/>
            <person name="Bentley D.R."/>
            <person name="Beck S."/>
            <person name="Rogers J."/>
            <person name="Dunham I."/>
        </authorList>
    </citation>
    <scope>NUCLEOTIDE SEQUENCE [LARGE SCALE GENOMIC DNA]</scope>
</reference>
<reference key="3">
    <citation type="journal article" date="2004" name="Genome Res.">
        <title>The status, quality, and expansion of the NIH full-length cDNA project: the Mammalian Gene Collection (MGC).</title>
        <authorList>
            <consortium name="The MGC Project Team"/>
        </authorList>
    </citation>
    <scope>NUCLEOTIDE SEQUENCE [LARGE SCALE MRNA]</scope>
    <source>
        <tissue>Mammary gland</tissue>
    </source>
</reference>
<reference key="4">
    <citation type="journal article" date="2001" name="Genomics">
        <title>The human mitochondrial ribosomal protein genes: mapping of 54 genes to the chromosomes and implications for human disorders.</title>
        <authorList>
            <person name="Kenmochi N."/>
            <person name="Suzuki T."/>
            <person name="Uechi T."/>
            <person name="Magoori M."/>
            <person name="Kuniba M."/>
            <person name="Higa S."/>
            <person name="Watanabe K."/>
            <person name="Tanaka T."/>
        </authorList>
    </citation>
    <scope>NUCLEOTIDE SEQUENCE [GENOMIC DNA] OF 90-135</scope>
</reference>
<reference key="5">
    <citation type="journal article" date="2001" name="J. Biol. Chem.">
        <title>The large subunit of the mammalian mitochondrial ribosome. Analysis of the complement of ribosomal proteins present.</title>
        <authorList>
            <person name="Koc E.C."/>
            <person name="Burkhart W."/>
            <person name="Blackburn K."/>
            <person name="Moyer M.B."/>
            <person name="Schlatzer D.M."/>
            <person name="Moseley A."/>
            <person name="Spremulli L.L."/>
        </authorList>
    </citation>
    <scope>IDENTIFICATION</scope>
</reference>
<reference key="6">
    <citation type="journal article" date="2005" name="J. Cell. Biochem.">
        <title>BMRP is a Bcl-2 binding protein that induces apoptosis.</title>
        <authorList>
            <person name="Chintharlapalli S.R."/>
            <person name="Jasti M."/>
            <person name="Malladi S."/>
            <person name="Parsa K.V.L."/>
            <person name="Ballestero R.P."/>
            <person name="Gonzalez-Garcia M."/>
        </authorList>
    </citation>
    <scope>INTERACTION WITH BCL2</scope>
    <scope>TISSUE SPECIFICITY</scope>
</reference>
<reference key="7">
    <citation type="journal article" date="2005" name="Mol. Cell. Biol.">
        <title>Mitochondrial ribosomal protein L41 suppresses cell growth in association with p53 and p27Kip1.</title>
        <authorList>
            <person name="Yoo Y.A."/>
            <person name="Kim M.J."/>
            <person name="Park J.K."/>
            <person name="Chung Y.M."/>
            <person name="Lee J.H."/>
            <person name="Chi S.-G."/>
            <person name="Kim J.S."/>
            <person name="Yoo Y.D."/>
        </authorList>
    </citation>
    <scope>FUNCTION</scope>
    <scope>SUBCELLULAR LOCATION</scope>
</reference>
<reference key="8">
    <citation type="journal article" date="2005" name="Biochem. Biophys. Res. Commun.">
        <title>Mitochondrial ribosomal protein L41 mediates serum starvation-induced cell-cycle arrest through an increase of p21(WAF1/CIP1).</title>
        <authorList>
            <person name="Kim M.J."/>
            <person name="Yoo Y.A."/>
            <person name="Kim H.J."/>
            <person name="Kang S."/>
            <person name="Kim Y.G."/>
            <person name="Kim J.S."/>
            <person name="Yoo Y.D."/>
        </authorList>
    </citation>
    <scope>FUNCTION</scope>
</reference>
<reference key="9">
    <citation type="journal article" date="2011" name="BMC Syst. Biol.">
        <title>Initial characterization of the human central proteome.</title>
        <authorList>
            <person name="Burkard T.R."/>
            <person name="Planyavsky M."/>
            <person name="Kaupe I."/>
            <person name="Breitwieser F.P."/>
            <person name="Buerckstuemmer T."/>
            <person name="Bennett K.L."/>
            <person name="Superti-Furga G."/>
            <person name="Colinge J."/>
        </authorList>
    </citation>
    <scope>IDENTIFICATION BY MASS SPECTROMETRY [LARGE SCALE ANALYSIS]</scope>
</reference>
<reference key="10">
    <citation type="journal article" date="2015" name="Proteomics">
        <title>N-terminome analysis of the human mitochondrial proteome.</title>
        <authorList>
            <person name="Vaca Jacome A.S."/>
            <person name="Rabilloud T."/>
            <person name="Schaeffer-Reiss C."/>
            <person name="Rompais M."/>
            <person name="Ayoub D."/>
            <person name="Lane L."/>
            <person name="Bairoch A."/>
            <person name="Van Dorsselaer A."/>
            <person name="Carapito C."/>
        </authorList>
    </citation>
    <scope>IDENTIFICATION BY MASS SPECTROMETRY [LARGE SCALE ANALYSIS]</scope>
</reference>
<reference evidence="12" key="11">
    <citation type="journal article" date="2014" name="Science">
        <title>Structure of the large ribosomal subunit from human mitochondria.</title>
        <authorList>
            <person name="Brown A."/>
            <person name="Amunts A."/>
            <person name="Bai X.C."/>
            <person name="Sugimoto Y."/>
            <person name="Edwards P.C."/>
            <person name="Murshudov G."/>
            <person name="Scheres S.H."/>
            <person name="Ramakrishnan V."/>
        </authorList>
    </citation>
    <scope>STRUCTURE BY ELECTRON MICROSCOPY (3.40 ANGSTROMS)</scope>
    <scope>SUBCELLULAR LOCATION</scope>
    <scope>SUBUNIT</scope>
</reference>
<reference evidence="13" key="12">
    <citation type="journal article" date="2015" name="Science">
        <title>Ribosome. The structure of the human mitochondrial ribosome.</title>
        <authorList>
            <person name="Amunts A."/>
            <person name="Brown A."/>
            <person name="Toots J."/>
            <person name="Scheres S.H."/>
            <person name="Ramakrishnan V."/>
        </authorList>
    </citation>
    <scope>STRUCTURE BY ELECTRON MICROSCOPY (3.50 ANGSTROMS)</scope>
    <scope>SUBCELLULAR LOCATION</scope>
    <scope>SUBUNIT</scope>
</reference>
<reference evidence="14 15" key="13">
    <citation type="journal article" date="2017" name="Nat. Struct. Mol. Biol.">
        <title>Structures of the human mitochondrial ribosome in native states of assembly.</title>
        <authorList>
            <person name="Brown A."/>
            <person name="Rathore S."/>
            <person name="Kimanius D."/>
            <person name="Aibara S."/>
            <person name="Bai X.C."/>
            <person name="Rorbach J."/>
            <person name="Amunts A."/>
            <person name="Ramakrishnan V."/>
        </authorList>
    </citation>
    <scope>STRUCTURE BY ELECTRON MICROSCOPY (3.03 ANGSTROMS)</scope>
    <scope>SUBCELLULAR LOCATION</scope>
    <scope>SUBUNIT</scope>
</reference>
<reference evidence="16 17" key="14">
    <citation type="journal article" date="2022" name="Nat. Commun.">
        <title>A late-stage assembly checkpoint of the human mitochondrial ribosome large subunit.</title>
        <authorList>
            <person name="Rebelo-Guiomar P."/>
            <person name="Pellegrino S."/>
            <person name="Dent K.C."/>
            <person name="Sas-Chen A."/>
            <person name="Miller-Fleming L."/>
            <person name="Garone C."/>
            <person name="Van Haute L."/>
            <person name="Rogan J.F."/>
            <person name="Dinan A."/>
            <person name="Firth A.E."/>
            <person name="Andrews B."/>
            <person name="Whitworth A.J."/>
            <person name="Schwartz S."/>
            <person name="Warren A.J."/>
            <person name="Minczuk M."/>
        </authorList>
    </citation>
    <scope>STRUCTURE BY ELECTRON MICROSCOPY (2.9 ANGSTROMS) IN COMPLEX WITH MTLSU</scope>
    <scope>SUBUNIT</scope>
</reference>
<comment type="function">
    <text evidence="3 4 5 6 7 8">Component of the mitochondrial ribosome large subunit (PubMed:25278503, PubMed:25838379, PubMed:28892042, PubMed:35177605). Also involved in apoptosis and cell cycle (PubMed:16024796, PubMed:16256947). Enhances p53/TP53 stability, thereby contributing to p53/TP53-induced apoptosis in response to growth-inhibitory condition. Enhances p53/TP53 translocation to the mitochondria. Has the ability to arrest the cell cycle at the G1 phase, possibly by stabilizing the CDKN1A and CDKN1B (p27Kip1) proteins (PubMed:16024796).</text>
</comment>
<comment type="subunit">
    <text evidence="2 5 6 11">Component of the mitochondrial large ribosomal subunit (mt-LSU). Mature mammalian 55S mitochondrial ribosomes consist of a small (28S) and a large (39S) subunit. The 28S small subunit contains a 12S ribosomal RNA (12S mt-rRNA) and 30 different proteins. The 39S large subunit contains a 16S rRNA (16S mt-rRNA), a copy of mitochondrial valine transfer RNA (mt-tRNA(Val)), which plays an integral structural role, and 52 different proteins (PubMed:11551941, PubMed:25278503, PubMed:25838379). Interacts with BCL2 (PubMed:15547950).</text>
</comment>
<comment type="interaction">
    <interactant intactId="EBI-912501">
        <id>Q8IXM3</id>
    </interactant>
    <interactant intactId="EBI-11603430">
        <id>Q6PL24</id>
        <label>TMED8</label>
    </interactant>
    <organismsDiffer>false</organismsDiffer>
    <experiments>3</experiments>
</comment>
<comment type="interaction">
    <interactant intactId="EBI-912501">
        <id>Q8IXM3</id>
    </interactant>
    <interactant intactId="EBI-5661333">
        <id>Q969Q1</id>
        <label>TRIM63</label>
    </interactant>
    <organismsDiffer>false</organismsDiffer>
    <experiments>2</experiments>
</comment>
<comment type="subcellular location">
    <subcellularLocation>
        <location evidence="3 5 6 7">Mitochondrion</location>
    </subcellularLocation>
</comment>
<comment type="tissue specificity">
    <text evidence="2">Present in kidney, liver, thymus and testis, and at lower level in brain and spleen (at protein level).</text>
</comment>
<comment type="similarity">
    <text evidence="10">Belongs to the mitochondrion-specific ribosomal protein mL41 family.</text>
</comment>
<organism>
    <name type="scientific">Homo sapiens</name>
    <name type="common">Human</name>
    <dbReference type="NCBI Taxonomy" id="9606"/>
    <lineage>
        <taxon>Eukaryota</taxon>
        <taxon>Metazoa</taxon>
        <taxon>Chordata</taxon>
        <taxon>Craniata</taxon>
        <taxon>Vertebrata</taxon>
        <taxon>Euteleostomi</taxon>
        <taxon>Mammalia</taxon>
        <taxon>Eutheria</taxon>
        <taxon>Euarchontoglires</taxon>
        <taxon>Primates</taxon>
        <taxon>Haplorrhini</taxon>
        <taxon>Catarrhini</taxon>
        <taxon>Hominidae</taxon>
        <taxon>Homo</taxon>
    </lineage>
</organism>
<name>RM41_HUMAN</name>
<evidence type="ECO:0000250" key="1"/>
<evidence type="ECO:0000269" key="2">
    <source>
    </source>
</evidence>
<evidence type="ECO:0000269" key="3">
    <source>
    </source>
</evidence>
<evidence type="ECO:0000269" key="4">
    <source>
    </source>
</evidence>
<evidence type="ECO:0000269" key="5">
    <source>
    </source>
</evidence>
<evidence type="ECO:0000269" key="6">
    <source>
    </source>
</evidence>
<evidence type="ECO:0000269" key="7">
    <source>
    </source>
</evidence>
<evidence type="ECO:0000269" key="8">
    <source>
    </source>
</evidence>
<evidence type="ECO:0000303" key="9">
    <source>
    </source>
</evidence>
<evidence type="ECO:0000305" key="10"/>
<evidence type="ECO:0000305" key="11">
    <source>
    </source>
</evidence>
<evidence type="ECO:0007744" key="12">
    <source>
        <dbReference type="PDB" id="3J7Y"/>
    </source>
</evidence>
<evidence type="ECO:0007744" key="13">
    <source>
        <dbReference type="PDB" id="3J9M"/>
    </source>
</evidence>
<evidence type="ECO:0007744" key="14">
    <source>
        <dbReference type="PDB" id="5OOL"/>
    </source>
</evidence>
<evidence type="ECO:0007744" key="15">
    <source>
        <dbReference type="PDB" id="5OOM"/>
    </source>
</evidence>
<evidence type="ECO:0007744" key="16">
    <source>
        <dbReference type="PDB" id="7QH6"/>
    </source>
</evidence>
<evidence type="ECO:0007744" key="17">
    <source>
        <dbReference type="PDB" id="7QH7"/>
    </source>
</evidence>
<evidence type="ECO:0007829" key="18">
    <source>
        <dbReference type="PDB" id="3J7Y"/>
    </source>
</evidence>
<evidence type="ECO:0007829" key="19">
    <source>
        <dbReference type="PDB" id="7OF0"/>
    </source>
</evidence>
<evidence type="ECO:0007829" key="20">
    <source>
        <dbReference type="PDB" id="7QH7"/>
    </source>
</evidence>
<evidence type="ECO:0007829" key="21">
    <source>
        <dbReference type="PDB" id="8QU5"/>
    </source>
</evidence>
<protein>
    <recommendedName>
        <fullName evidence="9">Large ribosomal subunit protein mL41</fullName>
    </recommendedName>
    <alternativeName>
        <fullName>39S ribosomal protein L41, mitochondrial</fullName>
        <shortName>L41mt</shortName>
        <shortName>MRP-L41</shortName>
    </alternativeName>
    <alternativeName>
        <fullName>Bcl-2-interacting mitochondrial ribosomal protein L41</fullName>
    </alternativeName>
    <alternativeName>
        <fullName>Cell proliferation-inducing gene 3 protein</fullName>
    </alternativeName>
    <alternativeName>
        <fullName>MRP-L27 homolog</fullName>
    </alternativeName>
</protein>